<comment type="similarity">
    <text evidence="2">Belongs to the recoverin family.</text>
</comment>
<evidence type="ECO:0000255" key="1">
    <source>
        <dbReference type="PROSITE-ProRule" id="PRU00448"/>
    </source>
</evidence>
<evidence type="ECO:0000305" key="2"/>
<organism>
    <name type="scientific">Dictyostelium discoideum</name>
    <name type="common">Social amoeba</name>
    <dbReference type="NCBI Taxonomy" id="44689"/>
    <lineage>
        <taxon>Eukaryota</taxon>
        <taxon>Amoebozoa</taxon>
        <taxon>Evosea</taxon>
        <taxon>Eumycetozoa</taxon>
        <taxon>Dictyostelia</taxon>
        <taxon>Dictyosteliales</taxon>
        <taxon>Dictyosteliaceae</taxon>
        <taxon>Dictyostelium</taxon>
    </lineage>
</organism>
<keyword id="KW-0106">Calcium</keyword>
<keyword id="KW-0479">Metal-binding</keyword>
<keyword id="KW-1185">Reference proteome</keyword>
<keyword id="KW-0677">Repeat</keyword>
<sequence length="194" mass="22280">MGAGNTKLSKEEINELIKKTNYTKDQIDKLSKDYNEYSSKDKKSGFTESEFIDFFYCRFRDWDKDLLIQLFKLFDTDCNGILDFKEFVTSLYIMTKAPVVEKLSLLFDLFDKDQSGHLEVDEVEKLIGVAVACGTSLGMDYSGVTNYVFSICSAENMSNKKKGMNKEEFIKAASNSDKFCKMICFYDSMGQMLY</sequence>
<proteinExistence type="evidence at protein level"/>
<accession>Q55C62</accession>
<accession>Q6DN53</accession>
<gene>
    <name type="primary">cbpJ</name>
    <name type="ORF">DDB_G0270210</name>
</gene>
<dbReference type="EMBL" id="AY655129">
    <property type="protein sequence ID" value="AAT72745.1"/>
    <property type="molecule type" value="mRNA"/>
</dbReference>
<dbReference type="EMBL" id="AAFI02000005">
    <property type="protein sequence ID" value="EAL72455.1"/>
    <property type="molecule type" value="Genomic_DNA"/>
</dbReference>
<dbReference type="RefSeq" id="XP_646619.1">
    <property type="nucleotide sequence ID" value="XM_641527.1"/>
</dbReference>
<dbReference type="SMR" id="Q55C62"/>
<dbReference type="STRING" id="44689.Q55C62"/>
<dbReference type="PaxDb" id="44689-DDB0231009"/>
<dbReference type="EnsemblProtists" id="EAL72455">
    <property type="protein sequence ID" value="EAL72455"/>
    <property type="gene ID" value="DDB_G0270210"/>
</dbReference>
<dbReference type="GeneID" id="8617591"/>
<dbReference type="KEGG" id="ddi:DDB_G0270210"/>
<dbReference type="dictyBase" id="DDB_G0270210">
    <property type="gene designation" value="cbpJ"/>
</dbReference>
<dbReference type="VEuPathDB" id="AmoebaDB:DDB_G0270210"/>
<dbReference type="eggNOG" id="KOG0044">
    <property type="taxonomic scope" value="Eukaryota"/>
</dbReference>
<dbReference type="HOGENOM" id="CLU_1436878_0_0_1"/>
<dbReference type="InParanoid" id="Q55C62"/>
<dbReference type="OMA" id="TALYLMT"/>
<dbReference type="PhylomeDB" id="Q55C62"/>
<dbReference type="Reactome" id="R-DDI-2514859">
    <property type="pathway name" value="Inactivation, recovery and regulation of the phototransduction cascade"/>
</dbReference>
<dbReference type="PRO" id="PR:Q55C62"/>
<dbReference type="Proteomes" id="UP000002195">
    <property type="component" value="Chromosome 1"/>
</dbReference>
<dbReference type="GO" id="GO:0005509">
    <property type="term" value="F:calcium ion binding"/>
    <property type="evidence" value="ECO:0000314"/>
    <property type="project" value="dictyBase"/>
</dbReference>
<dbReference type="GO" id="GO:0019900">
    <property type="term" value="F:kinase binding"/>
    <property type="evidence" value="ECO:0007669"/>
    <property type="project" value="InterPro"/>
</dbReference>
<dbReference type="GO" id="GO:0019722">
    <property type="term" value="P:calcium-mediated signaling"/>
    <property type="evidence" value="ECO:0007669"/>
    <property type="project" value="InterPro"/>
</dbReference>
<dbReference type="GO" id="GO:0009966">
    <property type="term" value="P:regulation of signal transduction"/>
    <property type="evidence" value="ECO:0000318"/>
    <property type="project" value="GO_Central"/>
</dbReference>
<dbReference type="CDD" id="cd00051">
    <property type="entry name" value="EFh"/>
    <property type="match status" value="1"/>
</dbReference>
<dbReference type="FunFam" id="1.10.238.10:FF:000009">
    <property type="entry name" value="Visinin-like protein 1"/>
    <property type="match status" value="1"/>
</dbReference>
<dbReference type="Gene3D" id="1.10.238.10">
    <property type="entry name" value="EF-hand"/>
    <property type="match status" value="1"/>
</dbReference>
<dbReference type="InterPro" id="IPR045198">
    <property type="entry name" value="CNBL1-10"/>
</dbReference>
<dbReference type="InterPro" id="IPR011992">
    <property type="entry name" value="EF-hand-dom_pair"/>
</dbReference>
<dbReference type="InterPro" id="IPR018247">
    <property type="entry name" value="EF_Hand_1_Ca_BS"/>
</dbReference>
<dbReference type="InterPro" id="IPR002048">
    <property type="entry name" value="EF_hand_dom"/>
</dbReference>
<dbReference type="PANTHER" id="PTHR23056">
    <property type="entry name" value="CALCINEURIN B"/>
    <property type="match status" value="1"/>
</dbReference>
<dbReference type="PANTHER" id="PTHR23056:SF110">
    <property type="entry name" value="CALMODULIN"/>
    <property type="match status" value="1"/>
</dbReference>
<dbReference type="PRINTS" id="PR00450">
    <property type="entry name" value="RECOVERIN"/>
</dbReference>
<dbReference type="SMART" id="SM00054">
    <property type="entry name" value="EFh"/>
    <property type="match status" value="2"/>
</dbReference>
<dbReference type="SUPFAM" id="SSF47473">
    <property type="entry name" value="EF-hand"/>
    <property type="match status" value="1"/>
</dbReference>
<dbReference type="PROSITE" id="PS00018">
    <property type="entry name" value="EF_HAND_1"/>
    <property type="match status" value="2"/>
</dbReference>
<dbReference type="PROSITE" id="PS50222">
    <property type="entry name" value="EF_HAND_2"/>
    <property type="match status" value="2"/>
</dbReference>
<feature type="chain" id="PRO_0000323763" description="Calcium-binding protein J">
    <location>
        <begin position="1"/>
        <end position="194"/>
    </location>
</feature>
<feature type="domain" description="EF-hand 1" evidence="1">
    <location>
        <begin position="62"/>
        <end position="97"/>
    </location>
</feature>
<feature type="domain" description="EF-hand 2" evidence="1">
    <location>
        <begin position="98"/>
        <end position="133"/>
    </location>
</feature>
<feature type="binding site" evidence="1">
    <location>
        <position position="75"/>
    </location>
    <ligand>
        <name>Ca(2+)</name>
        <dbReference type="ChEBI" id="CHEBI:29108"/>
        <label>1</label>
    </ligand>
</feature>
<feature type="binding site" evidence="1">
    <location>
        <position position="77"/>
    </location>
    <ligand>
        <name>Ca(2+)</name>
        <dbReference type="ChEBI" id="CHEBI:29108"/>
        <label>1</label>
    </ligand>
</feature>
<feature type="binding site" evidence="1">
    <location>
        <position position="79"/>
    </location>
    <ligand>
        <name>Ca(2+)</name>
        <dbReference type="ChEBI" id="CHEBI:29108"/>
        <label>1</label>
    </ligand>
</feature>
<feature type="binding site" evidence="1">
    <location>
        <position position="86"/>
    </location>
    <ligand>
        <name>Ca(2+)</name>
        <dbReference type="ChEBI" id="CHEBI:29108"/>
        <label>1</label>
    </ligand>
</feature>
<feature type="binding site" evidence="1">
    <location>
        <position position="111"/>
    </location>
    <ligand>
        <name>Ca(2+)</name>
        <dbReference type="ChEBI" id="CHEBI:29108"/>
        <label>2</label>
    </ligand>
</feature>
<feature type="binding site" evidence="1">
    <location>
        <position position="113"/>
    </location>
    <ligand>
        <name>Ca(2+)</name>
        <dbReference type="ChEBI" id="CHEBI:29108"/>
        <label>2</label>
    </ligand>
</feature>
<feature type="binding site" evidence="1">
    <location>
        <position position="115"/>
    </location>
    <ligand>
        <name>Ca(2+)</name>
        <dbReference type="ChEBI" id="CHEBI:29108"/>
        <label>2</label>
    </ligand>
</feature>
<feature type="binding site" evidence="1">
    <location>
        <position position="117"/>
    </location>
    <ligand>
        <name>Ca(2+)</name>
        <dbReference type="ChEBI" id="CHEBI:29108"/>
        <label>2</label>
    </ligand>
</feature>
<feature type="binding site" evidence="1">
    <location>
        <position position="122"/>
    </location>
    <ligand>
        <name>Ca(2+)</name>
        <dbReference type="ChEBI" id="CHEBI:29108"/>
        <label>2</label>
    </ligand>
</feature>
<feature type="sequence conflict" description="In Ref. 1; AAT72745." evidence="2" ref="1">
    <original>L</original>
    <variation>V</variation>
    <location>
        <position position="105"/>
    </location>
</feature>
<reference key="1">
    <citation type="journal article" date="2004" name="Dev. Growth Differ.">
        <title>Disruption of the NCS-1/frequenin-related ncsA gene in Dictyostelium discoideum accelerates development.</title>
        <authorList>
            <person name="Coukell B."/>
            <person name="Cameron A."/>
            <person name="Perusini S."/>
            <person name="Shim K."/>
        </authorList>
    </citation>
    <scope>NUCLEOTIDE SEQUENCE [MRNA]</scope>
    <scope>CALCIUM-BINDING</scope>
    <source>
        <strain>AX4</strain>
    </source>
</reference>
<reference key="2">
    <citation type="journal article" date="2005" name="Nature">
        <title>The genome of the social amoeba Dictyostelium discoideum.</title>
        <authorList>
            <person name="Eichinger L."/>
            <person name="Pachebat J.A."/>
            <person name="Gloeckner G."/>
            <person name="Rajandream M.A."/>
            <person name="Sucgang R."/>
            <person name="Berriman M."/>
            <person name="Song J."/>
            <person name="Olsen R."/>
            <person name="Szafranski K."/>
            <person name="Xu Q."/>
            <person name="Tunggal B."/>
            <person name="Kummerfeld S."/>
            <person name="Madera M."/>
            <person name="Konfortov B.A."/>
            <person name="Rivero F."/>
            <person name="Bankier A.T."/>
            <person name="Lehmann R."/>
            <person name="Hamlin N."/>
            <person name="Davies R."/>
            <person name="Gaudet P."/>
            <person name="Fey P."/>
            <person name="Pilcher K."/>
            <person name="Chen G."/>
            <person name="Saunders D."/>
            <person name="Sodergren E.J."/>
            <person name="Davis P."/>
            <person name="Kerhornou A."/>
            <person name="Nie X."/>
            <person name="Hall N."/>
            <person name="Anjard C."/>
            <person name="Hemphill L."/>
            <person name="Bason N."/>
            <person name="Farbrother P."/>
            <person name="Desany B."/>
            <person name="Just E."/>
            <person name="Morio T."/>
            <person name="Rost R."/>
            <person name="Churcher C.M."/>
            <person name="Cooper J."/>
            <person name="Haydock S."/>
            <person name="van Driessche N."/>
            <person name="Cronin A."/>
            <person name="Goodhead I."/>
            <person name="Muzny D.M."/>
            <person name="Mourier T."/>
            <person name="Pain A."/>
            <person name="Lu M."/>
            <person name="Harper D."/>
            <person name="Lindsay R."/>
            <person name="Hauser H."/>
            <person name="James K.D."/>
            <person name="Quiles M."/>
            <person name="Madan Babu M."/>
            <person name="Saito T."/>
            <person name="Buchrieser C."/>
            <person name="Wardroper A."/>
            <person name="Felder M."/>
            <person name="Thangavelu M."/>
            <person name="Johnson D."/>
            <person name="Knights A."/>
            <person name="Loulseged H."/>
            <person name="Mungall K.L."/>
            <person name="Oliver K."/>
            <person name="Price C."/>
            <person name="Quail M.A."/>
            <person name="Urushihara H."/>
            <person name="Hernandez J."/>
            <person name="Rabbinowitsch E."/>
            <person name="Steffen D."/>
            <person name="Sanders M."/>
            <person name="Ma J."/>
            <person name="Kohara Y."/>
            <person name="Sharp S."/>
            <person name="Simmonds M.N."/>
            <person name="Spiegler S."/>
            <person name="Tivey A."/>
            <person name="Sugano S."/>
            <person name="White B."/>
            <person name="Walker D."/>
            <person name="Woodward J.R."/>
            <person name="Winckler T."/>
            <person name="Tanaka Y."/>
            <person name="Shaulsky G."/>
            <person name="Schleicher M."/>
            <person name="Weinstock G.M."/>
            <person name="Rosenthal A."/>
            <person name="Cox E.C."/>
            <person name="Chisholm R.L."/>
            <person name="Gibbs R.A."/>
            <person name="Loomis W.F."/>
            <person name="Platzer M."/>
            <person name="Kay R.R."/>
            <person name="Williams J.G."/>
            <person name="Dear P.H."/>
            <person name="Noegel A.A."/>
            <person name="Barrell B.G."/>
            <person name="Kuspa A."/>
        </authorList>
    </citation>
    <scope>NUCLEOTIDE SEQUENCE [LARGE SCALE GENOMIC DNA]</scope>
    <source>
        <strain>AX4</strain>
    </source>
</reference>
<name>CBPJ_DICDI</name>
<protein>
    <recommendedName>
        <fullName>Calcium-binding protein J</fullName>
    </recommendedName>
</protein>